<accession>B1X073</accession>
<organism>
    <name type="scientific">Crocosphaera subtropica (strain ATCC 51142 / BH68)</name>
    <name type="common">Cyanothece sp. (strain ATCC 51142)</name>
    <dbReference type="NCBI Taxonomy" id="43989"/>
    <lineage>
        <taxon>Bacteria</taxon>
        <taxon>Bacillati</taxon>
        <taxon>Cyanobacteriota</taxon>
        <taxon>Cyanophyceae</taxon>
        <taxon>Oscillatoriophycideae</taxon>
        <taxon>Chroococcales</taxon>
        <taxon>Aphanothecaceae</taxon>
        <taxon>Crocosphaera</taxon>
        <taxon>Crocosphaera subtropica</taxon>
    </lineage>
</organism>
<protein>
    <recommendedName>
        <fullName evidence="1">Large ribosomal subunit protein bL12</fullName>
    </recommendedName>
    <alternativeName>
        <fullName evidence="3">50S ribosomal protein L7/L12</fullName>
    </alternativeName>
</protein>
<name>RL7_CROS5</name>
<sequence length="133" mass="13880">MSAATDEILEKLKSLTLLEASELVKQIEEAFGVSAAAPSGGMMMMAPGAAAPGAAAAEPEEEKTEFDVILEEVPGDKKIAILKVVRGITGLGLKEAKDMVESTPKPIKEGTGKEDAEDIKKKLEEAGAKVSVK</sequence>
<comment type="function">
    <text evidence="1">Forms part of the ribosomal stalk which helps the ribosome interact with GTP-bound translation factors. Is thus essential for accurate translation.</text>
</comment>
<comment type="subunit">
    <text evidence="1">Homodimer. Part of the ribosomal stalk of the 50S ribosomal subunit. Forms a multimeric L10(L12)X complex, where L10 forms an elongated spine to which 2 to 4 L12 dimers bind in a sequential fashion. Binds GTP-bound translation factors.</text>
</comment>
<comment type="similarity">
    <text evidence="1">Belongs to the bacterial ribosomal protein bL12 family.</text>
</comment>
<evidence type="ECO:0000255" key="1">
    <source>
        <dbReference type="HAMAP-Rule" id="MF_00368"/>
    </source>
</evidence>
<evidence type="ECO:0000256" key="2">
    <source>
        <dbReference type="SAM" id="MobiDB-lite"/>
    </source>
</evidence>
<evidence type="ECO:0000305" key="3"/>
<gene>
    <name evidence="1" type="primary">rplL</name>
    <name evidence="1" type="synonym">rpl12</name>
    <name type="ordered locus">cce_0223</name>
</gene>
<keyword id="KW-1185">Reference proteome</keyword>
<keyword id="KW-0687">Ribonucleoprotein</keyword>
<keyword id="KW-0689">Ribosomal protein</keyword>
<reference key="1">
    <citation type="journal article" date="2008" name="Proc. Natl. Acad. Sci. U.S.A.">
        <title>The genome of Cyanothece 51142, a unicellular diazotrophic cyanobacterium important in the marine nitrogen cycle.</title>
        <authorList>
            <person name="Welsh E.A."/>
            <person name="Liberton M."/>
            <person name="Stoeckel J."/>
            <person name="Loh T."/>
            <person name="Elvitigala T."/>
            <person name="Wang C."/>
            <person name="Wollam A."/>
            <person name="Fulton R.S."/>
            <person name="Clifton S.W."/>
            <person name="Jacobs J.M."/>
            <person name="Aurora R."/>
            <person name="Ghosh B.K."/>
            <person name="Sherman L.A."/>
            <person name="Smith R.D."/>
            <person name="Wilson R.K."/>
            <person name="Pakrasi H.B."/>
        </authorList>
    </citation>
    <scope>NUCLEOTIDE SEQUENCE [LARGE SCALE GENOMIC DNA]</scope>
    <source>
        <strain>ATCC 51142 / BH68</strain>
    </source>
</reference>
<proteinExistence type="inferred from homology"/>
<dbReference type="EMBL" id="CP000806">
    <property type="protein sequence ID" value="ACB49574.1"/>
    <property type="molecule type" value="Genomic_DNA"/>
</dbReference>
<dbReference type="RefSeq" id="WP_009546720.1">
    <property type="nucleotide sequence ID" value="NC_010546.1"/>
</dbReference>
<dbReference type="SMR" id="B1X073"/>
<dbReference type="STRING" id="43989.cce_0223"/>
<dbReference type="KEGG" id="cyt:cce_0223"/>
<dbReference type="eggNOG" id="COG0222">
    <property type="taxonomic scope" value="Bacteria"/>
</dbReference>
<dbReference type="HOGENOM" id="CLU_086499_3_0_3"/>
<dbReference type="OrthoDB" id="9811748at2"/>
<dbReference type="Proteomes" id="UP000001203">
    <property type="component" value="Chromosome circular"/>
</dbReference>
<dbReference type="GO" id="GO:0022625">
    <property type="term" value="C:cytosolic large ribosomal subunit"/>
    <property type="evidence" value="ECO:0007669"/>
    <property type="project" value="TreeGrafter"/>
</dbReference>
<dbReference type="GO" id="GO:0003729">
    <property type="term" value="F:mRNA binding"/>
    <property type="evidence" value="ECO:0007669"/>
    <property type="project" value="TreeGrafter"/>
</dbReference>
<dbReference type="GO" id="GO:0003735">
    <property type="term" value="F:structural constituent of ribosome"/>
    <property type="evidence" value="ECO:0007669"/>
    <property type="project" value="InterPro"/>
</dbReference>
<dbReference type="GO" id="GO:0006412">
    <property type="term" value="P:translation"/>
    <property type="evidence" value="ECO:0007669"/>
    <property type="project" value="UniProtKB-UniRule"/>
</dbReference>
<dbReference type="CDD" id="cd00387">
    <property type="entry name" value="Ribosomal_L7_L12"/>
    <property type="match status" value="1"/>
</dbReference>
<dbReference type="FunFam" id="3.30.1390.10:FF:000001">
    <property type="entry name" value="50S ribosomal protein L7/L12"/>
    <property type="match status" value="1"/>
</dbReference>
<dbReference type="Gene3D" id="3.30.1390.10">
    <property type="match status" value="1"/>
</dbReference>
<dbReference type="Gene3D" id="1.20.5.710">
    <property type="entry name" value="Single helix bin"/>
    <property type="match status" value="1"/>
</dbReference>
<dbReference type="HAMAP" id="MF_00368">
    <property type="entry name" value="Ribosomal_bL12"/>
    <property type="match status" value="1"/>
</dbReference>
<dbReference type="InterPro" id="IPR000206">
    <property type="entry name" value="Ribosomal_bL12"/>
</dbReference>
<dbReference type="InterPro" id="IPR013823">
    <property type="entry name" value="Ribosomal_bL12_C"/>
</dbReference>
<dbReference type="InterPro" id="IPR014719">
    <property type="entry name" value="Ribosomal_bL12_C/ClpS-like"/>
</dbReference>
<dbReference type="InterPro" id="IPR008932">
    <property type="entry name" value="Ribosomal_bL12_oligo"/>
</dbReference>
<dbReference type="InterPro" id="IPR036235">
    <property type="entry name" value="Ribosomal_bL12_oligo_N_sf"/>
</dbReference>
<dbReference type="NCBIfam" id="TIGR00855">
    <property type="entry name" value="L12"/>
    <property type="match status" value="1"/>
</dbReference>
<dbReference type="PANTHER" id="PTHR45987">
    <property type="entry name" value="39S RIBOSOMAL PROTEIN L12"/>
    <property type="match status" value="1"/>
</dbReference>
<dbReference type="PANTHER" id="PTHR45987:SF4">
    <property type="entry name" value="LARGE RIBOSOMAL SUBUNIT PROTEIN BL12M"/>
    <property type="match status" value="1"/>
</dbReference>
<dbReference type="Pfam" id="PF00542">
    <property type="entry name" value="Ribosomal_L12"/>
    <property type="match status" value="1"/>
</dbReference>
<dbReference type="Pfam" id="PF16320">
    <property type="entry name" value="Ribosomal_L12_N"/>
    <property type="match status" value="1"/>
</dbReference>
<dbReference type="SUPFAM" id="SSF54736">
    <property type="entry name" value="ClpS-like"/>
    <property type="match status" value="1"/>
</dbReference>
<dbReference type="SUPFAM" id="SSF48300">
    <property type="entry name" value="Ribosomal protein L7/12, oligomerisation (N-terminal) domain"/>
    <property type="match status" value="1"/>
</dbReference>
<feature type="chain" id="PRO_1000195787" description="Large ribosomal subunit protein bL12">
    <location>
        <begin position="1"/>
        <end position="133"/>
    </location>
</feature>
<feature type="region of interest" description="Disordered" evidence="2">
    <location>
        <begin position="98"/>
        <end position="118"/>
    </location>
</feature>